<name>RAEP_CANAX</name>
<reference key="1">
    <citation type="submission" date="1998-12" db="EMBL/GenBank/DDBJ databases">
        <title>Molecular cloning of Rab geranylgeranyl transferase escort protein (REP) homologue from Candida albicans.</title>
        <authorList>
            <person name="Ishii N."/>
            <person name="Aoki Y."/>
            <person name="Arisawa M."/>
        </authorList>
    </citation>
    <scope>NUCLEOTIDE SEQUENCE [GENOMIC DNA]</scope>
    <source>
        <strain>ATCC 10259 / CBS 5796 / DSM 5817 / JCM 2078 / NBRC 1060 / 2024</strain>
    </source>
</reference>
<sequence>MDNCDVLIIGTGLQESILAAALSWQGTQVLHIDSNTYYGDSCSTLTIEQLKKWCGDVNSGKIHQFQDAQIYIPGGKQSNQYTSKDYGIDLTPKIMFCQSDLLSLLIKSRVYRYLEFQSLSNFHVFENDDFQQKVNATTKQDIFTDKSLSLMTKRYLMKFLKFLLLDPDYKQRVKPYADTPIQVFLQQEFKLEEPQINELVYSIGLSYKEQTSTKQALIRMKRFLSSFDVYGKFPCMVSKFGGPGELSQGFCRSAAVAGTTYKLNTNLTDFDPISKIAHFNDGSHIKINEKIIISPTQLPKFLQSSYNKVVENLQPYYVTRLVTVVRRDCKEWMSGNESSAIVVFPPHSLPTDNQHSVQVIIQNGNSGVCPDGQAIWFSSTVEQDLSRAKVDLESAFEKMETSLLRESSEEIVNDILGDNNNNNNNNNNNNNNNNNNNNNDFVMNAQGTTTPVLVNSFKLGSSLINFVPKDKLEIVCKLGYVEKTFINPDLSNIFKPTKTNNIVYKDVEDANNEIIFTNMPSSELSYDGIITDVKSIYQRITGTTDDFFDVDFEDEEDEYDRNNQPVVQPKRSSVVGGIVGGGSITSLTALREQHNENNHSDNAIDSDEDEDEDINDMNDNEEEDDHGRGPEPFGADEMEL</sequence>
<protein>
    <recommendedName>
        <fullName>Rab proteins geranylgeranyltransferase component A</fullName>
    </recommendedName>
    <alternativeName>
        <fullName>Rab escort protein</fullName>
        <shortName>REP</shortName>
    </alternativeName>
</protein>
<evidence type="ECO:0000250" key="1"/>
<evidence type="ECO:0000256" key="2">
    <source>
        <dbReference type="SAM" id="MobiDB-lite"/>
    </source>
</evidence>
<evidence type="ECO:0000305" key="3"/>
<accession>O93831</accession>
<gene>
    <name type="primary">MRS6</name>
</gene>
<comment type="function">
    <text evidence="1">Substrate-binding subunit (component A) of the Rab geranylgeranyltransferase (GGTase) complex. Binds unprenylated Rab proteins and presents the substrate peptide to the catalytic component B. The component A is thought to be regenerated by transferring its prenylated Rab back to the donor membrane (By similarity).</text>
</comment>
<comment type="similarity">
    <text evidence="3">Belongs to the Rab GDI family.</text>
</comment>
<keyword id="KW-0343">GTPase activation</keyword>
<proteinExistence type="inferred from homology"/>
<feature type="chain" id="PRO_0000056692" description="Rab proteins geranylgeranyltransferase component A">
    <location>
        <begin position="1"/>
        <end position="640"/>
    </location>
</feature>
<feature type="region of interest" description="Disordered" evidence="2">
    <location>
        <begin position="414"/>
        <end position="439"/>
    </location>
</feature>
<feature type="region of interest" description="Disordered" evidence="2">
    <location>
        <begin position="594"/>
        <end position="640"/>
    </location>
</feature>
<feature type="compositionally biased region" description="Low complexity" evidence="2">
    <location>
        <begin position="419"/>
        <end position="439"/>
    </location>
</feature>
<feature type="compositionally biased region" description="Acidic residues" evidence="2">
    <location>
        <begin position="604"/>
        <end position="624"/>
    </location>
</feature>
<dbReference type="EMBL" id="AB021317">
    <property type="protein sequence ID" value="BAA36167.1"/>
    <property type="molecule type" value="Genomic_DNA"/>
</dbReference>
<dbReference type="SMR" id="O93831"/>
<dbReference type="VEuPathDB" id="FungiDB:C3_07170C_A"/>
<dbReference type="VEuPathDB" id="FungiDB:CAWG_03025"/>
<dbReference type="GO" id="GO:0005829">
    <property type="term" value="C:cytosol"/>
    <property type="evidence" value="ECO:0007669"/>
    <property type="project" value="TreeGrafter"/>
</dbReference>
<dbReference type="GO" id="GO:0016020">
    <property type="term" value="C:membrane"/>
    <property type="evidence" value="ECO:0007669"/>
    <property type="project" value="EnsemblFungi"/>
</dbReference>
<dbReference type="GO" id="GO:0005634">
    <property type="term" value="C:nucleus"/>
    <property type="evidence" value="ECO:0007669"/>
    <property type="project" value="TreeGrafter"/>
</dbReference>
<dbReference type="GO" id="GO:0005968">
    <property type="term" value="C:Rab-protein geranylgeranyltransferase complex"/>
    <property type="evidence" value="ECO:0007669"/>
    <property type="project" value="EnsemblFungi"/>
</dbReference>
<dbReference type="GO" id="GO:0005092">
    <property type="term" value="F:GDP-dissociation inhibitor activity"/>
    <property type="evidence" value="ECO:0007669"/>
    <property type="project" value="InterPro"/>
</dbReference>
<dbReference type="GO" id="GO:0005096">
    <property type="term" value="F:GTPase activator activity"/>
    <property type="evidence" value="ECO:0007669"/>
    <property type="project" value="UniProtKB-KW"/>
</dbReference>
<dbReference type="GO" id="GO:0004663">
    <property type="term" value="F:Rab geranylgeranyltransferase activity"/>
    <property type="evidence" value="ECO:0007669"/>
    <property type="project" value="EnsemblFungi"/>
</dbReference>
<dbReference type="GO" id="GO:0031267">
    <property type="term" value="F:small GTPase binding"/>
    <property type="evidence" value="ECO:0007669"/>
    <property type="project" value="EnsemblFungi"/>
</dbReference>
<dbReference type="GO" id="GO:0006888">
    <property type="term" value="P:endoplasmic reticulum to Golgi vesicle-mediated transport"/>
    <property type="evidence" value="ECO:0007669"/>
    <property type="project" value="EnsemblFungi"/>
</dbReference>
<dbReference type="GO" id="GO:0006612">
    <property type="term" value="P:protein targeting to membrane"/>
    <property type="evidence" value="ECO:0007669"/>
    <property type="project" value="EnsemblFungi"/>
</dbReference>
<dbReference type="GO" id="GO:0007264">
    <property type="term" value="P:small GTPase-mediated signal transduction"/>
    <property type="evidence" value="ECO:0007669"/>
    <property type="project" value="InterPro"/>
</dbReference>
<dbReference type="FunFam" id="1.10.405.10:FF:000003">
    <property type="entry name" value="Rab proteins geranylgeranyltransferase component A"/>
    <property type="match status" value="1"/>
</dbReference>
<dbReference type="Gene3D" id="3.50.50.60">
    <property type="entry name" value="FAD/NAD(P)-binding domain"/>
    <property type="match status" value="1"/>
</dbReference>
<dbReference type="Gene3D" id="1.10.405.10">
    <property type="entry name" value="Guanine Nucleotide Dissociation Inhibitor, domain 1"/>
    <property type="match status" value="1"/>
</dbReference>
<dbReference type="Gene3D" id="3.30.519.10">
    <property type="entry name" value="Guanine Nucleotide Dissociation Inhibitor, domain 2"/>
    <property type="match status" value="1"/>
</dbReference>
<dbReference type="InterPro" id="IPR036188">
    <property type="entry name" value="FAD/NAD-bd_sf"/>
</dbReference>
<dbReference type="InterPro" id="IPR018203">
    <property type="entry name" value="GDP_dissociation_inhibitor"/>
</dbReference>
<dbReference type="InterPro" id="IPR017230">
    <property type="entry name" value="Mrs6"/>
</dbReference>
<dbReference type="PANTHER" id="PTHR11787:SF4">
    <property type="entry name" value="CHM, RAB ESCORT PROTEIN 1"/>
    <property type="match status" value="1"/>
</dbReference>
<dbReference type="PANTHER" id="PTHR11787">
    <property type="entry name" value="RAB GDP-DISSOCIATION INHIBITOR"/>
    <property type="match status" value="1"/>
</dbReference>
<dbReference type="Pfam" id="PF00996">
    <property type="entry name" value="GDI"/>
    <property type="match status" value="1"/>
</dbReference>
<dbReference type="PIRSF" id="PIRSF037514">
    <property type="entry name" value="Rab_ger_ger_transf_A_fun"/>
    <property type="match status" value="1"/>
</dbReference>
<dbReference type="PRINTS" id="PR00891">
    <property type="entry name" value="RABGDIREP"/>
</dbReference>
<dbReference type="PRINTS" id="PR00894">
    <property type="entry name" value="YEASTMRS6P"/>
</dbReference>
<dbReference type="SUPFAM" id="SSF54373">
    <property type="entry name" value="FAD-linked reductases, C-terminal domain"/>
    <property type="match status" value="1"/>
</dbReference>
<dbReference type="SUPFAM" id="SSF51905">
    <property type="entry name" value="FAD/NAD(P)-binding domain"/>
    <property type="match status" value="1"/>
</dbReference>
<organism>
    <name type="scientific">Candida albicans</name>
    <name type="common">Yeast</name>
    <dbReference type="NCBI Taxonomy" id="5476"/>
    <lineage>
        <taxon>Eukaryota</taxon>
        <taxon>Fungi</taxon>
        <taxon>Dikarya</taxon>
        <taxon>Ascomycota</taxon>
        <taxon>Saccharomycotina</taxon>
        <taxon>Pichiomycetes</taxon>
        <taxon>Debaryomycetaceae</taxon>
        <taxon>Candida/Lodderomyces clade</taxon>
        <taxon>Candida</taxon>
    </lineage>
</organism>